<organism>
    <name type="scientific">Mus musculus</name>
    <name type="common">Mouse</name>
    <dbReference type="NCBI Taxonomy" id="10090"/>
    <lineage>
        <taxon>Eukaryota</taxon>
        <taxon>Metazoa</taxon>
        <taxon>Chordata</taxon>
        <taxon>Craniata</taxon>
        <taxon>Vertebrata</taxon>
        <taxon>Euteleostomi</taxon>
        <taxon>Mammalia</taxon>
        <taxon>Eutheria</taxon>
        <taxon>Euarchontoglires</taxon>
        <taxon>Glires</taxon>
        <taxon>Rodentia</taxon>
        <taxon>Myomorpha</taxon>
        <taxon>Muroidea</taxon>
        <taxon>Muridae</taxon>
        <taxon>Murinae</taxon>
        <taxon>Mus</taxon>
        <taxon>Mus</taxon>
    </lineage>
</organism>
<protein>
    <recommendedName>
        <fullName evidence="9">Disintegrin and metalloproteinase domain-containing protein 2</fullName>
        <shortName>ADAM 2</shortName>
    </recommendedName>
    <alternativeName>
        <fullName evidence="9">Fertilin subunit beta</fullName>
    </alternativeName>
    <alternativeName>
        <fullName>PH-30</fullName>
        <shortName>PH30</shortName>
    </alternativeName>
    <alternativeName>
        <fullName evidence="9">PH30-beta</fullName>
    </alternativeName>
</protein>
<comment type="function">
    <text evidence="1">Sperm surface membrane protein that may be involved in sperm-egg plasma membrane adhesion and fusion during fertilization. Could have a direct role in sperm-zona binding or migration of sperm from the uterus into the oviduct. Interactions with egg membrane could be mediated via binding between its disintegrin-like domain to one or more integrins receptors on the egg. This is a non catalytic metalloprotease-like protein (By similarity).</text>
</comment>
<comment type="subunit">
    <text>Heterodimer with ADAM1/fertilin subunit alpha.</text>
</comment>
<comment type="subcellular location">
    <subcellularLocation>
        <location>Membrane</location>
        <topology>Single-pass type I membrane protein</topology>
    </subcellularLocation>
</comment>
<comment type="tissue specificity">
    <text evidence="6 7">Expressed in the testis and testicular sperm (at protein level).</text>
</comment>
<comment type="domain">
    <text evidence="1">A tripeptide motif (QDE) within disintegrin-like domain could be involved in the binding to egg integrin receptor and thus could mediate sperm/egg binding.</text>
</comment>
<comment type="PTM">
    <text>The signal and the metalloprotease domain are cleaved during the epididymal maturation of the spermatozoa.</text>
</comment>
<feature type="signal peptide" evidence="2">
    <location>
        <begin position="1"/>
        <end position="18"/>
    </location>
</feature>
<feature type="propeptide" id="PRO_0000029046" evidence="1">
    <location>
        <begin position="19"/>
        <end position="180"/>
    </location>
</feature>
<feature type="chain" id="PRO_0000029047" description="Disintegrin and metalloproteinase domain-containing protein 2">
    <location>
        <begin position="181"/>
        <end position="735"/>
    </location>
</feature>
<feature type="topological domain" description="Extracellular" evidence="2">
    <location>
        <begin position="19"/>
        <end position="686"/>
    </location>
</feature>
<feature type="transmembrane region" description="Helical" evidence="2">
    <location>
        <begin position="687"/>
        <end position="707"/>
    </location>
</feature>
<feature type="topological domain" description="Cytoplasmic" evidence="2">
    <location>
        <begin position="708"/>
        <end position="735"/>
    </location>
</feature>
<feature type="domain" description="Peptidase M12B" evidence="5">
    <location>
        <begin position="184"/>
        <end position="381"/>
    </location>
</feature>
<feature type="domain" description="Disintegrin" evidence="3">
    <location>
        <begin position="389"/>
        <end position="476"/>
    </location>
</feature>
<feature type="domain" description="EGF-like" evidence="4">
    <location>
        <begin position="615"/>
        <end position="648"/>
    </location>
</feature>
<feature type="modified residue" description="Phosphoserine" evidence="10">
    <location>
        <position position="729"/>
    </location>
</feature>
<feature type="glycosylation site" description="N-linked (GlcNAc...) asparagine" evidence="2">
    <location>
        <position position="128"/>
    </location>
</feature>
<feature type="glycosylation site" description="N-linked (GlcNAc...) asparagine" evidence="2">
    <location>
        <position position="226"/>
    </location>
</feature>
<feature type="glycosylation site" description="N-linked (GlcNAc...) asparagine" evidence="2">
    <location>
        <position position="279"/>
    </location>
</feature>
<feature type="glycosylation site" description="N-linked (GlcNAc...) asparagine" evidence="2">
    <location>
        <position position="359"/>
    </location>
</feature>
<feature type="glycosylation site" description="N-linked (GlcNAc...) asparagine" evidence="2">
    <location>
        <position position="463"/>
    </location>
</feature>
<feature type="glycosylation site" description="N-linked (GlcNAc...) asparagine" evidence="2">
    <location>
        <position position="489"/>
    </location>
</feature>
<feature type="glycosylation site" description="N-linked (GlcNAc...) asparagine" evidence="2">
    <location>
        <position position="569"/>
    </location>
</feature>
<feature type="glycosylation site" description="N-linked (GlcNAc...) asparagine" evidence="2">
    <location>
        <position position="585"/>
    </location>
</feature>
<feature type="disulfide bond" evidence="1">
    <location>
        <begin position="293"/>
        <end position="376"/>
    </location>
</feature>
<feature type="disulfide bond" evidence="1">
    <location>
        <begin position="335"/>
        <end position="360"/>
    </location>
</feature>
<feature type="disulfide bond" evidence="1">
    <location>
        <begin position="337"/>
        <end position="342"/>
    </location>
</feature>
<feature type="disulfide bond" evidence="1">
    <location>
        <begin position="449"/>
        <end position="469"/>
    </location>
</feature>
<feature type="disulfide bond" evidence="1">
    <location>
        <begin position="619"/>
        <end position="630"/>
    </location>
</feature>
<feature type="disulfide bond" evidence="1">
    <location>
        <begin position="624"/>
        <end position="636"/>
    </location>
</feature>
<feature type="disulfide bond" evidence="1">
    <location>
        <begin position="638"/>
        <end position="647"/>
    </location>
</feature>
<feature type="sequence conflict" description="In Ref. 2; AAD04207." evidence="8" ref="2">
    <original>W</original>
    <variation>R</variation>
    <location>
        <position position="2"/>
    </location>
</feature>
<feature type="sequence conflict" description="In Ref. 4; AAA74921." evidence="8" ref="4">
    <original>LSQS</original>
    <variation>IRHE</variation>
    <location>
        <begin position="17"/>
        <end position="20"/>
    </location>
</feature>
<feature type="sequence conflict" description="In Ref. 4; AAA74921." evidence="8" ref="4">
    <original>GT</original>
    <variation>A</variation>
    <location>
        <begin position="24"/>
        <end position="25"/>
    </location>
</feature>
<feature type="sequence conflict" description="In Ref. 1; AAA90980." evidence="8" ref="1">
    <original>I</original>
    <variation>M</variation>
    <location>
        <position position="113"/>
    </location>
</feature>
<feature type="sequence conflict" description="In Ref. 4; AAA74921." evidence="8" ref="4">
    <original>LEFWMDENK</original>
    <variation>WNFGWMKQ</variation>
    <location>
        <begin position="234"/>
        <end position="242"/>
    </location>
</feature>
<feature type="sequence conflict" description="In Ref. 4; AAA74921." evidence="8" ref="4">
    <original>TG</original>
    <variation>QA</variation>
    <location>
        <begin position="246"/>
        <end position="247"/>
    </location>
</feature>
<feature type="sequence conflict" description="In Ref. 4; AAA74921." evidence="8" ref="4">
    <original>A</original>
    <variation>L</variation>
    <location>
        <position position="286"/>
    </location>
</feature>
<feature type="sequence conflict" description="In Ref. 4; AAA74921." evidence="8" ref="4">
    <original>DV</original>
    <variation>RRL</variation>
    <location>
        <begin position="331"/>
        <end position="332"/>
    </location>
</feature>
<feature type="sequence conflict" description="In Ref. 2; AAD04207." evidence="8" ref="2">
    <original>R</original>
    <variation>T</variation>
    <location>
        <position position="382"/>
    </location>
</feature>
<feature type="sequence conflict" description="In Ref. 4; AAA74921." evidence="8" ref="4">
    <original>S</original>
    <variation>T</variation>
    <location>
        <position position="658"/>
    </location>
</feature>
<feature type="sequence conflict" description="In Ref. 2; AAD04207." evidence="8" ref="2">
    <original>A</original>
    <variation>R</variation>
    <location>
        <position position="679"/>
    </location>
</feature>
<feature type="sequence conflict" description="In Ref. 1; AAA90980." evidence="8" ref="1">
    <original>Q</original>
    <variation>P</variation>
    <location>
        <position position="712"/>
    </location>
</feature>
<name>ADAM2_MOUSE</name>
<keyword id="KW-0130">Cell adhesion</keyword>
<keyword id="KW-1015">Disulfide bond</keyword>
<keyword id="KW-0245">EGF-like domain</keyword>
<keyword id="KW-0325">Glycoprotein</keyword>
<keyword id="KW-0472">Membrane</keyword>
<keyword id="KW-0597">Phosphoprotein</keyword>
<keyword id="KW-1185">Reference proteome</keyword>
<keyword id="KW-0732">Signal</keyword>
<keyword id="KW-0812">Transmembrane</keyword>
<keyword id="KW-1133">Transmembrane helix</keyword>
<sequence length="735" mass="82375">MWLILLLLSGLSELGGLSQSQTEGTREKLHVQVTVPEKIRSVTSNGYETQVTYNLKIEGKTYTLDLMQKPFLPPNFRVYSYDNAGIMRSLEQKFQNICYFQGYIEGYPNSMVIVSTCTGLRGFLQFGNVSYGIEPLESSSGFEHVIYQVEPEKGGALLYAEKDIDLRDSQYKIRSIKPQRIVSHYLEIHIVVEKQMFEHIGADTAIVTQKIFQLIGLANAIFAPFNLTVILSSLEFWMDENKILTTGDANKLLYRFLKWKQSYLVLRPHDMAFLLVYRNTTDYVGATYQGKMCDKNYAGGVALHPKAVTLESLAIILVQLLSLSMGLAYDDVNKCQCGVPVCVMNPEAPHSSGVRAFSNCSMEDFSKFITSQSSHCLQNQPRLQPSYKMAVCGNGEVEEDEICDCGKKGCAEMPPPCCNPDTCKLSDGSECSSGICCNSCKLKRKGEVCRLAQDECDVTEYCNGTSEVCEDFFVQNGHPCDNRKWICINGTCQSGEQQCQDLFGIDAGFGSSECFWELNSKSDISGSCGISAGGYKECPPNDRMCGKIICKYQSENILKLRSATVIYANISGHVCVSLEYPQGHNESQKMWVRDGTVCGSNKVCQNQKCVADTFLGYDCNLEKCNHHGVCNNKKNCHCDPTYLPPDCKRMKDSYPGGSIDSGNKERAEPIPVRPYIASAYRSKSPRWPFFLIIPFYVVILVLIGMLVKVYSQRMKWRMDDFSSEEQFESESESKD</sequence>
<proteinExistence type="evidence at protein level"/>
<reference key="1">
    <citation type="journal article" date="1995" name="J. Cell Sci.">
        <title>Mouse sperm-egg plasma membrane interactions: analysis of roles of egg integrins and the mouse sperm homologue of PH-30 (fertilin) beta.</title>
        <authorList>
            <person name="Evans J.P."/>
            <person name="Schultz R.M."/>
            <person name="Kopf G.S."/>
        </authorList>
    </citation>
    <scope>NUCLEOTIDE SEQUENCE [MRNA]</scope>
    <scope>TISSUE SPECIFICITY</scope>
    <source>
        <tissue>Testis</tissue>
    </source>
</reference>
<reference key="2">
    <citation type="submission" date="1995-10" db="EMBL/GenBank/DDBJ databases">
        <authorList>
            <person name="Gupta S.K."/>
            <person name="Alves K."/>
            <person name="Palladino L.O."/>
            <person name="Mark G.E."/>
            <person name="Hollis G.F."/>
        </authorList>
    </citation>
    <scope>NUCLEOTIDE SEQUENCE [MRNA]</scope>
</reference>
<reference key="3">
    <citation type="journal article" date="2005" name="Science">
        <title>The transcriptional landscape of the mammalian genome.</title>
        <authorList>
            <person name="Carninci P."/>
            <person name="Kasukawa T."/>
            <person name="Katayama S."/>
            <person name="Gough J."/>
            <person name="Frith M.C."/>
            <person name="Maeda N."/>
            <person name="Oyama R."/>
            <person name="Ravasi T."/>
            <person name="Lenhard B."/>
            <person name="Wells C."/>
            <person name="Kodzius R."/>
            <person name="Shimokawa K."/>
            <person name="Bajic V.B."/>
            <person name="Brenner S.E."/>
            <person name="Batalov S."/>
            <person name="Forrest A.R."/>
            <person name="Zavolan M."/>
            <person name="Davis M.J."/>
            <person name="Wilming L.G."/>
            <person name="Aidinis V."/>
            <person name="Allen J.E."/>
            <person name="Ambesi-Impiombato A."/>
            <person name="Apweiler R."/>
            <person name="Aturaliya R.N."/>
            <person name="Bailey T.L."/>
            <person name="Bansal M."/>
            <person name="Baxter L."/>
            <person name="Beisel K.W."/>
            <person name="Bersano T."/>
            <person name="Bono H."/>
            <person name="Chalk A.M."/>
            <person name="Chiu K.P."/>
            <person name="Choudhary V."/>
            <person name="Christoffels A."/>
            <person name="Clutterbuck D.R."/>
            <person name="Crowe M.L."/>
            <person name="Dalla E."/>
            <person name="Dalrymple B.P."/>
            <person name="de Bono B."/>
            <person name="Della Gatta G."/>
            <person name="di Bernardo D."/>
            <person name="Down T."/>
            <person name="Engstrom P."/>
            <person name="Fagiolini M."/>
            <person name="Faulkner G."/>
            <person name="Fletcher C.F."/>
            <person name="Fukushima T."/>
            <person name="Furuno M."/>
            <person name="Futaki S."/>
            <person name="Gariboldi M."/>
            <person name="Georgii-Hemming P."/>
            <person name="Gingeras T.R."/>
            <person name="Gojobori T."/>
            <person name="Green R.E."/>
            <person name="Gustincich S."/>
            <person name="Harbers M."/>
            <person name="Hayashi Y."/>
            <person name="Hensch T.K."/>
            <person name="Hirokawa N."/>
            <person name="Hill D."/>
            <person name="Huminiecki L."/>
            <person name="Iacono M."/>
            <person name="Ikeo K."/>
            <person name="Iwama A."/>
            <person name="Ishikawa T."/>
            <person name="Jakt M."/>
            <person name="Kanapin A."/>
            <person name="Katoh M."/>
            <person name="Kawasawa Y."/>
            <person name="Kelso J."/>
            <person name="Kitamura H."/>
            <person name="Kitano H."/>
            <person name="Kollias G."/>
            <person name="Krishnan S.P."/>
            <person name="Kruger A."/>
            <person name="Kummerfeld S.K."/>
            <person name="Kurochkin I.V."/>
            <person name="Lareau L.F."/>
            <person name="Lazarevic D."/>
            <person name="Lipovich L."/>
            <person name="Liu J."/>
            <person name="Liuni S."/>
            <person name="McWilliam S."/>
            <person name="Madan Babu M."/>
            <person name="Madera M."/>
            <person name="Marchionni L."/>
            <person name="Matsuda H."/>
            <person name="Matsuzawa S."/>
            <person name="Miki H."/>
            <person name="Mignone F."/>
            <person name="Miyake S."/>
            <person name="Morris K."/>
            <person name="Mottagui-Tabar S."/>
            <person name="Mulder N."/>
            <person name="Nakano N."/>
            <person name="Nakauchi H."/>
            <person name="Ng P."/>
            <person name="Nilsson R."/>
            <person name="Nishiguchi S."/>
            <person name="Nishikawa S."/>
            <person name="Nori F."/>
            <person name="Ohara O."/>
            <person name="Okazaki Y."/>
            <person name="Orlando V."/>
            <person name="Pang K.C."/>
            <person name="Pavan W.J."/>
            <person name="Pavesi G."/>
            <person name="Pesole G."/>
            <person name="Petrovsky N."/>
            <person name="Piazza S."/>
            <person name="Reed J."/>
            <person name="Reid J.F."/>
            <person name="Ring B.Z."/>
            <person name="Ringwald M."/>
            <person name="Rost B."/>
            <person name="Ruan Y."/>
            <person name="Salzberg S.L."/>
            <person name="Sandelin A."/>
            <person name="Schneider C."/>
            <person name="Schoenbach C."/>
            <person name="Sekiguchi K."/>
            <person name="Semple C.A."/>
            <person name="Seno S."/>
            <person name="Sessa L."/>
            <person name="Sheng Y."/>
            <person name="Shibata Y."/>
            <person name="Shimada H."/>
            <person name="Shimada K."/>
            <person name="Silva D."/>
            <person name="Sinclair B."/>
            <person name="Sperling S."/>
            <person name="Stupka E."/>
            <person name="Sugiura K."/>
            <person name="Sultana R."/>
            <person name="Takenaka Y."/>
            <person name="Taki K."/>
            <person name="Tammoja K."/>
            <person name="Tan S.L."/>
            <person name="Tang S."/>
            <person name="Taylor M.S."/>
            <person name="Tegner J."/>
            <person name="Teichmann S.A."/>
            <person name="Ueda H.R."/>
            <person name="van Nimwegen E."/>
            <person name="Verardo R."/>
            <person name="Wei C.L."/>
            <person name="Yagi K."/>
            <person name="Yamanishi H."/>
            <person name="Zabarovsky E."/>
            <person name="Zhu S."/>
            <person name="Zimmer A."/>
            <person name="Hide W."/>
            <person name="Bult C."/>
            <person name="Grimmond S.M."/>
            <person name="Teasdale R.D."/>
            <person name="Liu E.T."/>
            <person name="Brusic V."/>
            <person name="Quackenbush J."/>
            <person name="Wahlestedt C."/>
            <person name="Mattick J.S."/>
            <person name="Hume D.A."/>
            <person name="Kai C."/>
            <person name="Sasaki D."/>
            <person name="Tomaru Y."/>
            <person name="Fukuda S."/>
            <person name="Kanamori-Katayama M."/>
            <person name="Suzuki M."/>
            <person name="Aoki J."/>
            <person name="Arakawa T."/>
            <person name="Iida J."/>
            <person name="Imamura K."/>
            <person name="Itoh M."/>
            <person name="Kato T."/>
            <person name="Kawaji H."/>
            <person name="Kawagashira N."/>
            <person name="Kawashima T."/>
            <person name="Kojima M."/>
            <person name="Kondo S."/>
            <person name="Konno H."/>
            <person name="Nakano K."/>
            <person name="Ninomiya N."/>
            <person name="Nishio T."/>
            <person name="Okada M."/>
            <person name="Plessy C."/>
            <person name="Shibata K."/>
            <person name="Shiraki T."/>
            <person name="Suzuki S."/>
            <person name="Tagami M."/>
            <person name="Waki K."/>
            <person name="Watahiki A."/>
            <person name="Okamura-Oho Y."/>
            <person name="Suzuki H."/>
            <person name="Kawai J."/>
            <person name="Hayashizaki Y."/>
        </authorList>
    </citation>
    <scope>NUCLEOTIDE SEQUENCE [LARGE SCALE MRNA]</scope>
    <source>
        <strain>C57BL/6J</strain>
        <tissue>Testis</tissue>
    </source>
</reference>
<reference key="4">
    <citation type="journal article" date="1995" name="Dev. Biol.">
        <title>ADAM, a widely distributed and developmentally regulated gene family encoding membrane proteins with a disintegrin and metalloprotease domain.</title>
        <authorList>
            <person name="Wolfsberg T.G."/>
            <person name="Straight P.D."/>
            <person name="Gerena R.L."/>
            <person name="Huovila A.-P."/>
            <person name="Primakoff P."/>
            <person name="Myles D.G."/>
            <person name="White J.M."/>
        </authorList>
    </citation>
    <scope>NUCLEOTIDE SEQUENCE [MRNA] OF 17-735</scope>
    <source>
        <tissue>Testis</tissue>
    </source>
</reference>
<reference key="5">
    <citation type="journal article" date="2010" name="Cell">
        <title>A tissue-specific atlas of mouse protein phosphorylation and expression.</title>
        <authorList>
            <person name="Huttlin E.L."/>
            <person name="Jedrychowski M.P."/>
            <person name="Elias J.E."/>
            <person name="Goswami T."/>
            <person name="Rad R."/>
            <person name="Beausoleil S.A."/>
            <person name="Villen J."/>
            <person name="Haas W."/>
            <person name="Sowa M.E."/>
            <person name="Gygi S.P."/>
        </authorList>
    </citation>
    <scope>PHOSPHORYLATION [LARGE SCALE ANALYSIS] AT SER-729</scope>
    <scope>IDENTIFICATION BY MASS SPECTROMETRY [LARGE SCALE ANALYSIS]</scope>
    <source>
        <tissue>Testis</tissue>
    </source>
</reference>
<reference key="6">
    <citation type="journal article" date="2011" name="J. Cell. Physiol.">
        <title>Identification of heat shock protein 5, calnexin and integral membrane protein 2B as Adam7-interacting membrane proteins in mouse sperm.</title>
        <authorList>
            <person name="Han C."/>
            <person name="Park I."/>
            <person name="Lee B."/>
            <person name="Jin S."/>
            <person name="Choi H."/>
            <person name="Kwon J.T."/>
            <person name="Kwon Y.I."/>
            <person name="Kim D.H."/>
            <person name="Park Z.Y."/>
            <person name="Cho C."/>
        </authorList>
    </citation>
    <scope>TISSUE SPECIFICITY</scope>
</reference>
<dbReference type="EMBL" id="U16242">
    <property type="protein sequence ID" value="AAA90980.1"/>
    <property type="molecule type" value="mRNA"/>
</dbReference>
<dbReference type="EMBL" id="U38806">
    <property type="protein sequence ID" value="AAD04207.1"/>
    <property type="molecule type" value="mRNA"/>
</dbReference>
<dbReference type="EMBL" id="AK016550">
    <property type="protein sequence ID" value="BAB30298.1"/>
    <property type="molecule type" value="mRNA"/>
</dbReference>
<dbReference type="EMBL" id="U22057">
    <property type="protein sequence ID" value="AAA74921.1"/>
    <property type="molecule type" value="mRNA"/>
</dbReference>
<dbReference type="CCDS" id="CCDS36959.1"/>
<dbReference type="RefSeq" id="NP_033748.2">
    <property type="nucleotide sequence ID" value="NM_009618.4"/>
</dbReference>
<dbReference type="SMR" id="Q60718"/>
<dbReference type="BioGRID" id="197966">
    <property type="interactions" value="9"/>
</dbReference>
<dbReference type="CORUM" id="Q60718"/>
<dbReference type="FunCoup" id="Q60718">
    <property type="interactions" value="16"/>
</dbReference>
<dbReference type="IntAct" id="Q60718">
    <property type="interactions" value="1"/>
</dbReference>
<dbReference type="MINT" id="Q60718"/>
<dbReference type="STRING" id="10090.ENSMUSP00000022618"/>
<dbReference type="MEROPS" id="M12.950"/>
<dbReference type="GlyCosmos" id="Q60718">
    <property type="glycosylation" value="8 sites, No reported glycans"/>
</dbReference>
<dbReference type="GlyGen" id="Q60718">
    <property type="glycosylation" value="8 sites"/>
</dbReference>
<dbReference type="iPTMnet" id="Q60718"/>
<dbReference type="PhosphoSitePlus" id="Q60718"/>
<dbReference type="PaxDb" id="10090-ENSMUSP00000022618"/>
<dbReference type="ProteomicsDB" id="285614"/>
<dbReference type="Antibodypedia" id="11200">
    <property type="antibodies" value="196 antibodies from 31 providers"/>
</dbReference>
<dbReference type="DNASU" id="11495"/>
<dbReference type="Ensembl" id="ENSMUST00000022618.6">
    <property type="protein sequence ID" value="ENSMUSP00000022618.6"/>
    <property type="gene ID" value="ENSMUSG00000022039.7"/>
</dbReference>
<dbReference type="GeneID" id="11495"/>
<dbReference type="KEGG" id="mmu:11495"/>
<dbReference type="UCSC" id="uc007uju.1">
    <property type="organism name" value="mouse"/>
</dbReference>
<dbReference type="AGR" id="MGI:1340894"/>
<dbReference type="CTD" id="2515"/>
<dbReference type="MGI" id="MGI:1340894">
    <property type="gene designation" value="Adam2"/>
</dbReference>
<dbReference type="VEuPathDB" id="HostDB:ENSMUSG00000022039"/>
<dbReference type="eggNOG" id="KOG3607">
    <property type="taxonomic scope" value="Eukaryota"/>
</dbReference>
<dbReference type="GeneTree" id="ENSGT00940000161961"/>
<dbReference type="HOGENOM" id="CLU_012714_4_1_1"/>
<dbReference type="InParanoid" id="Q60718"/>
<dbReference type="OMA" id="NHMGADT"/>
<dbReference type="OrthoDB" id="5951731at2759"/>
<dbReference type="PhylomeDB" id="Q60718"/>
<dbReference type="TreeFam" id="TF314733"/>
<dbReference type="Reactome" id="R-MMU-2534343">
    <property type="pathway name" value="Interaction With Cumulus Cells And The Zona Pellucida"/>
</dbReference>
<dbReference type="BioGRID-ORCS" id="11495">
    <property type="hits" value="6 hits in 77 CRISPR screens"/>
</dbReference>
<dbReference type="ChiTaRS" id="Adam2">
    <property type="organism name" value="mouse"/>
</dbReference>
<dbReference type="PRO" id="PR:Q60718"/>
<dbReference type="Proteomes" id="UP000000589">
    <property type="component" value="Chromosome 14"/>
</dbReference>
<dbReference type="RNAct" id="Q60718">
    <property type="molecule type" value="protein"/>
</dbReference>
<dbReference type="Bgee" id="ENSMUSG00000022039">
    <property type="expression patterns" value="Expressed in spermatocyte and 9 other cell types or tissues"/>
</dbReference>
<dbReference type="GO" id="GO:0009986">
    <property type="term" value="C:cell surface"/>
    <property type="evidence" value="ECO:0000314"/>
    <property type="project" value="MGI"/>
</dbReference>
<dbReference type="GO" id="GO:0016020">
    <property type="term" value="C:membrane"/>
    <property type="evidence" value="ECO:0007669"/>
    <property type="project" value="UniProtKB-SubCell"/>
</dbReference>
<dbReference type="GO" id="GO:0032991">
    <property type="term" value="C:protein-containing complex"/>
    <property type="evidence" value="ECO:0000314"/>
    <property type="project" value="MGI"/>
</dbReference>
<dbReference type="GO" id="GO:0004222">
    <property type="term" value="F:metalloendopeptidase activity"/>
    <property type="evidence" value="ECO:0007669"/>
    <property type="project" value="InterPro"/>
</dbReference>
<dbReference type="GO" id="GO:0030534">
    <property type="term" value="P:adult behavior"/>
    <property type="evidence" value="ECO:0000315"/>
    <property type="project" value="MGI"/>
</dbReference>
<dbReference type="GO" id="GO:0007155">
    <property type="term" value="P:cell adhesion"/>
    <property type="evidence" value="ECO:0000316"/>
    <property type="project" value="MGI"/>
</dbReference>
<dbReference type="GO" id="GO:0010467">
    <property type="term" value="P:gene expression"/>
    <property type="evidence" value="ECO:0000315"/>
    <property type="project" value="MGI"/>
</dbReference>
<dbReference type="GO" id="GO:0010628">
    <property type="term" value="P:positive regulation of gene expression"/>
    <property type="evidence" value="ECO:0000315"/>
    <property type="project" value="MGI"/>
</dbReference>
<dbReference type="GO" id="GO:0006508">
    <property type="term" value="P:proteolysis"/>
    <property type="evidence" value="ECO:0007669"/>
    <property type="project" value="InterPro"/>
</dbReference>
<dbReference type="GO" id="GO:0008542">
    <property type="term" value="P:visual learning"/>
    <property type="evidence" value="ECO:0000315"/>
    <property type="project" value="MGI"/>
</dbReference>
<dbReference type="CDD" id="cd04269">
    <property type="entry name" value="ZnMc_adamalysin_II_like"/>
    <property type="match status" value="1"/>
</dbReference>
<dbReference type="FunFam" id="3.40.390.10:FF:000033">
    <property type="entry name" value="A disintegrin and metallopeptidase domain 18"/>
    <property type="match status" value="1"/>
</dbReference>
<dbReference type="Gene3D" id="3.40.390.10">
    <property type="entry name" value="Collagenase (Catalytic Domain)"/>
    <property type="match status" value="1"/>
</dbReference>
<dbReference type="Gene3D" id="4.10.70.10">
    <property type="entry name" value="Disintegrin domain"/>
    <property type="match status" value="1"/>
</dbReference>
<dbReference type="InterPro" id="IPR006586">
    <property type="entry name" value="ADAM_Cys-rich"/>
</dbReference>
<dbReference type="InterPro" id="IPR018358">
    <property type="entry name" value="Disintegrin_CS"/>
</dbReference>
<dbReference type="InterPro" id="IPR001762">
    <property type="entry name" value="Disintegrin_dom"/>
</dbReference>
<dbReference type="InterPro" id="IPR036436">
    <property type="entry name" value="Disintegrin_dom_sf"/>
</dbReference>
<dbReference type="InterPro" id="IPR000742">
    <property type="entry name" value="EGF-like_dom"/>
</dbReference>
<dbReference type="InterPro" id="IPR024079">
    <property type="entry name" value="MetalloPept_cat_dom_sf"/>
</dbReference>
<dbReference type="InterPro" id="IPR001590">
    <property type="entry name" value="Peptidase_M12B"/>
</dbReference>
<dbReference type="InterPro" id="IPR002870">
    <property type="entry name" value="Peptidase_M12B_N"/>
</dbReference>
<dbReference type="InterPro" id="IPR034027">
    <property type="entry name" value="Reprolysin_adamalysin"/>
</dbReference>
<dbReference type="PANTHER" id="PTHR11905">
    <property type="entry name" value="ADAM A DISINTEGRIN AND METALLOPROTEASE DOMAIN"/>
    <property type="match status" value="1"/>
</dbReference>
<dbReference type="PANTHER" id="PTHR11905:SF108">
    <property type="entry name" value="DISINTEGRIN AND METALLOPROTEINASE DOMAIN-CONTAINING PROTEIN 2"/>
    <property type="match status" value="1"/>
</dbReference>
<dbReference type="Pfam" id="PF08516">
    <property type="entry name" value="ADAM_CR"/>
    <property type="match status" value="1"/>
</dbReference>
<dbReference type="Pfam" id="PF00200">
    <property type="entry name" value="Disintegrin"/>
    <property type="match status" value="1"/>
</dbReference>
<dbReference type="Pfam" id="PF01562">
    <property type="entry name" value="Pep_M12B_propep"/>
    <property type="match status" value="1"/>
</dbReference>
<dbReference type="Pfam" id="PF01421">
    <property type="entry name" value="Reprolysin"/>
    <property type="match status" value="1"/>
</dbReference>
<dbReference type="SMART" id="SM00608">
    <property type="entry name" value="ACR"/>
    <property type="match status" value="1"/>
</dbReference>
<dbReference type="SMART" id="SM00050">
    <property type="entry name" value="DISIN"/>
    <property type="match status" value="1"/>
</dbReference>
<dbReference type="SUPFAM" id="SSF57552">
    <property type="entry name" value="Blood coagulation inhibitor (disintegrin)"/>
    <property type="match status" value="1"/>
</dbReference>
<dbReference type="SUPFAM" id="SSF55486">
    <property type="entry name" value="Metalloproteases ('zincins'), catalytic domain"/>
    <property type="match status" value="1"/>
</dbReference>
<dbReference type="PROSITE" id="PS50215">
    <property type="entry name" value="ADAM_MEPRO"/>
    <property type="match status" value="1"/>
</dbReference>
<dbReference type="PROSITE" id="PS00427">
    <property type="entry name" value="DISINTEGRIN_1"/>
    <property type="match status" value="1"/>
</dbReference>
<dbReference type="PROSITE" id="PS50214">
    <property type="entry name" value="DISINTEGRIN_2"/>
    <property type="match status" value="1"/>
</dbReference>
<dbReference type="PROSITE" id="PS50026">
    <property type="entry name" value="EGF_3"/>
    <property type="match status" value="1"/>
</dbReference>
<gene>
    <name evidence="9" type="primary">Adam2</name>
    <name evidence="9" type="synonym">Ftnb</name>
</gene>
<evidence type="ECO:0000250" key="1"/>
<evidence type="ECO:0000255" key="2"/>
<evidence type="ECO:0000255" key="3">
    <source>
        <dbReference type="PROSITE-ProRule" id="PRU00068"/>
    </source>
</evidence>
<evidence type="ECO:0000255" key="4">
    <source>
        <dbReference type="PROSITE-ProRule" id="PRU00076"/>
    </source>
</evidence>
<evidence type="ECO:0000255" key="5">
    <source>
        <dbReference type="PROSITE-ProRule" id="PRU00276"/>
    </source>
</evidence>
<evidence type="ECO:0000269" key="6">
    <source>
    </source>
</evidence>
<evidence type="ECO:0000269" key="7">
    <source>
    </source>
</evidence>
<evidence type="ECO:0000305" key="8"/>
<evidence type="ECO:0000312" key="9">
    <source>
        <dbReference type="MGI" id="MGI:1340894"/>
    </source>
</evidence>
<evidence type="ECO:0007744" key="10">
    <source>
    </source>
</evidence>
<accession>Q60718</accession>
<accession>Q60814</accession>
<accession>Q9D4G3</accession>
<accession>Q9QWJ0</accession>